<comment type="function">
    <text evidence="4">Does not show activity on the acetylcholine receptors tested.</text>
</comment>
<comment type="subcellular location">
    <subcellularLocation>
        <location evidence="1">Secreted</location>
    </subcellularLocation>
</comment>
<comment type="tissue specificity">
    <text evidence="6">Expressed by the venom duct.</text>
</comment>
<comment type="domain">
    <text evidence="6">The cysteine framework is I (CC-C-C). Alpha4/3 pattern.</text>
</comment>
<comment type="miscellaneous">
    <text evidence="4">Negative results: the synthetic peptide does not detectably affect any of the nAChR subtypes tested (alpha-2-beta-2, alpha-2-beta-4, alpha-3-beta-2, alpha-3-beta-3, alpha-3-beta-4, alpha-4-beta-2, alpha-4-beta-4, alpha-6-beta-2 and alpha-6-beta-3).</text>
</comment>
<comment type="similarity">
    <text evidence="6">Belongs to the conotoxin A superfamily.</text>
</comment>
<evidence type="ECO:0000250" key="1"/>
<evidence type="ECO:0000250" key="2">
    <source>
        <dbReference type="UniProtKB" id="P0C1D0"/>
    </source>
</evidence>
<evidence type="ECO:0000255" key="3"/>
<evidence type="ECO:0000269" key="4">
    <source>
    </source>
</evidence>
<evidence type="ECO:0000303" key="5">
    <source>
    </source>
</evidence>
<evidence type="ECO:0000305" key="6"/>
<name>CA13_CONBN</name>
<keyword id="KW-0027">Amidation</keyword>
<keyword id="KW-1015">Disulfide bond</keyword>
<keyword id="KW-0872">Ion channel impairing toxin</keyword>
<keyword id="KW-0964">Secreted</keyword>
<keyword id="KW-0732">Signal</keyword>
<keyword id="KW-0800">Toxin</keyword>
<organism>
    <name type="scientific">Conus bandanus</name>
    <name type="common">Banded marble cone</name>
    <dbReference type="NCBI Taxonomy" id="72279"/>
    <lineage>
        <taxon>Eukaryota</taxon>
        <taxon>Metazoa</taxon>
        <taxon>Spiralia</taxon>
        <taxon>Lophotrochozoa</taxon>
        <taxon>Mollusca</taxon>
        <taxon>Gastropoda</taxon>
        <taxon>Caenogastropoda</taxon>
        <taxon>Neogastropoda</taxon>
        <taxon>Conoidea</taxon>
        <taxon>Conidae</taxon>
        <taxon>Conus</taxon>
    </lineage>
</organism>
<reference key="1">
    <citation type="journal article" date="2004" name="J. Biol. Chem.">
        <title>The A-superfamily of conotoxins: structural and functional divergence.</title>
        <authorList>
            <person name="Santos A.D."/>
            <person name="McIntosh J.M."/>
            <person name="Hillyard D.R."/>
            <person name="Cruz L.J."/>
            <person name="Olivera B.M."/>
        </authorList>
    </citation>
    <scope>NUCLEOTIDE SEQUENCE [MRNA]</scope>
    <scope>SYNTHESIS OF 49-61</scope>
    <source>
        <tissue>Venom duct</tissue>
    </source>
</reference>
<protein>
    <recommendedName>
        <fullName evidence="5">Alpha-conotoxin-like Bn1.3</fullName>
    </recommendedName>
</protein>
<proteinExistence type="inferred from homology"/>
<sequence length="62" mass="6830">MGMRMMFTVFLLVVLATAVLPVTLDRASDGRNAAANAKTPRLIAPFIRDYCCHRGPCMVWCG</sequence>
<dbReference type="ConoServer" id="20">
    <property type="toxin name" value="Bn1.3 precursor"/>
</dbReference>
<dbReference type="GO" id="GO:0005576">
    <property type="term" value="C:extracellular region"/>
    <property type="evidence" value="ECO:0007669"/>
    <property type="project" value="UniProtKB-SubCell"/>
</dbReference>
<dbReference type="GO" id="GO:0030550">
    <property type="term" value="F:acetylcholine receptor inhibitor activity"/>
    <property type="evidence" value="ECO:0007669"/>
    <property type="project" value="InterPro"/>
</dbReference>
<dbReference type="GO" id="GO:0099106">
    <property type="term" value="F:ion channel regulator activity"/>
    <property type="evidence" value="ECO:0007669"/>
    <property type="project" value="UniProtKB-KW"/>
</dbReference>
<dbReference type="GO" id="GO:0090729">
    <property type="term" value="F:toxin activity"/>
    <property type="evidence" value="ECO:0007669"/>
    <property type="project" value="UniProtKB-KW"/>
</dbReference>
<dbReference type="InterPro" id="IPR009958">
    <property type="entry name" value="Conotoxin_a-typ"/>
</dbReference>
<dbReference type="InterPro" id="IPR018072">
    <property type="entry name" value="Conotoxin_a-typ_CS"/>
</dbReference>
<dbReference type="Pfam" id="PF07365">
    <property type="entry name" value="Toxin_8"/>
    <property type="match status" value="1"/>
</dbReference>
<dbReference type="PROSITE" id="PS60014">
    <property type="entry name" value="ALPHA_CONOTOXIN"/>
    <property type="match status" value="1"/>
</dbReference>
<feature type="signal peptide" evidence="3">
    <location>
        <begin position="1"/>
        <end position="18"/>
    </location>
</feature>
<feature type="propeptide" id="PRO_0000251234" evidence="1">
    <location>
        <begin position="19"/>
        <end position="48"/>
    </location>
</feature>
<feature type="peptide" id="PRO_0000251235" description="Alpha-conotoxin-like Bn1.3">
    <location>
        <begin position="49"/>
        <end position="61"/>
    </location>
</feature>
<feature type="modified residue" description="Cysteine amide" evidence="1">
    <location>
        <position position="61"/>
    </location>
</feature>
<feature type="disulfide bond" evidence="2">
    <location>
        <begin position="51"/>
        <end position="57"/>
    </location>
</feature>
<feature type="disulfide bond" evidence="2">
    <location>
        <begin position="52"/>
        <end position="61"/>
    </location>
</feature>
<accession>P0C1Y2</accession>